<name>NTPPA_KORVE</name>
<sequence>MLRYNLGMGLILASASPRRSELLRKARMVFRVEPAHVPEVHTAGEDPKQYAQRLARDKARAVAAKYPNDFVIGADTIVVADAHVLEKPADEADAARMIRMLSGHTHEVTTGVCLCGPNVEIVETETTRVTVAEISDEEIADYIHTGEPMDKAGAYGIQGMFSRWVTGIEGDYFNVVGLPIARVYRMMRRAGVL</sequence>
<reference key="1">
    <citation type="journal article" date="2009" name="Appl. Environ. Microbiol.">
        <title>Three genomes from the phylum Acidobacteria provide insight into the lifestyles of these microorganisms in soils.</title>
        <authorList>
            <person name="Ward N.L."/>
            <person name="Challacombe J.F."/>
            <person name="Janssen P.H."/>
            <person name="Henrissat B."/>
            <person name="Coutinho P.M."/>
            <person name="Wu M."/>
            <person name="Xie G."/>
            <person name="Haft D.H."/>
            <person name="Sait M."/>
            <person name="Badger J."/>
            <person name="Barabote R.D."/>
            <person name="Bradley B."/>
            <person name="Brettin T.S."/>
            <person name="Brinkac L.M."/>
            <person name="Bruce D."/>
            <person name="Creasy T."/>
            <person name="Daugherty S.C."/>
            <person name="Davidsen T.M."/>
            <person name="DeBoy R.T."/>
            <person name="Detter J.C."/>
            <person name="Dodson R.J."/>
            <person name="Durkin A.S."/>
            <person name="Ganapathy A."/>
            <person name="Gwinn-Giglio M."/>
            <person name="Han C.S."/>
            <person name="Khouri H."/>
            <person name="Kiss H."/>
            <person name="Kothari S.P."/>
            <person name="Madupu R."/>
            <person name="Nelson K.E."/>
            <person name="Nelson W.C."/>
            <person name="Paulsen I."/>
            <person name="Penn K."/>
            <person name="Ren Q."/>
            <person name="Rosovitz M.J."/>
            <person name="Selengut J.D."/>
            <person name="Shrivastava S."/>
            <person name="Sullivan S.A."/>
            <person name="Tapia R."/>
            <person name="Thompson L.S."/>
            <person name="Watkins K.L."/>
            <person name="Yang Q."/>
            <person name="Yu C."/>
            <person name="Zafar N."/>
            <person name="Zhou L."/>
            <person name="Kuske C.R."/>
        </authorList>
    </citation>
    <scope>NUCLEOTIDE SEQUENCE [LARGE SCALE GENOMIC DNA]</scope>
    <source>
        <strain>Ellin345</strain>
    </source>
</reference>
<comment type="function">
    <text evidence="1">Nucleoside triphosphate pyrophosphatase that hydrolyzes dTTP and UTP. May have a dual role in cell division arrest and in preventing the incorporation of modified nucleotides into cellular nucleic acids.</text>
</comment>
<comment type="catalytic activity">
    <reaction evidence="1">
        <text>dTTP + H2O = dTMP + diphosphate + H(+)</text>
        <dbReference type="Rhea" id="RHEA:28534"/>
        <dbReference type="ChEBI" id="CHEBI:15377"/>
        <dbReference type="ChEBI" id="CHEBI:15378"/>
        <dbReference type="ChEBI" id="CHEBI:33019"/>
        <dbReference type="ChEBI" id="CHEBI:37568"/>
        <dbReference type="ChEBI" id="CHEBI:63528"/>
        <dbReference type="EC" id="3.6.1.9"/>
    </reaction>
</comment>
<comment type="catalytic activity">
    <reaction evidence="1">
        <text>UTP + H2O = UMP + diphosphate + H(+)</text>
        <dbReference type="Rhea" id="RHEA:29395"/>
        <dbReference type="ChEBI" id="CHEBI:15377"/>
        <dbReference type="ChEBI" id="CHEBI:15378"/>
        <dbReference type="ChEBI" id="CHEBI:33019"/>
        <dbReference type="ChEBI" id="CHEBI:46398"/>
        <dbReference type="ChEBI" id="CHEBI:57865"/>
        <dbReference type="EC" id="3.6.1.9"/>
    </reaction>
</comment>
<comment type="cofactor">
    <cofactor evidence="1">
        <name>a divalent metal cation</name>
        <dbReference type="ChEBI" id="CHEBI:60240"/>
    </cofactor>
</comment>
<comment type="subcellular location">
    <subcellularLocation>
        <location evidence="1">Cytoplasm</location>
    </subcellularLocation>
</comment>
<comment type="similarity">
    <text evidence="1">Belongs to the Maf family. YhdE subfamily.</text>
</comment>
<accession>Q1IV55</accession>
<evidence type="ECO:0000255" key="1">
    <source>
        <dbReference type="HAMAP-Rule" id="MF_00528"/>
    </source>
</evidence>
<protein>
    <recommendedName>
        <fullName evidence="1">dTTP/UTP pyrophosphatase</fullName>
        <shortName evidence="1">dTTPase/UTPase</shortName>
        <ecNumber evidence="1">3.6.1.9</ecNumber>
    </recommendedName>
    <alternativeName>
        <fullName evidence="1">Nucleoside triphosphate pyrophosphatase</fullName>
    </alternativeName>
    <alternativeName>
        <fullName evidence="1">Nucleotide pyrophosphatase</fullName>
        <shortName evidence="1">Nucleotide PPase</shortName>
    </alternativeName>
</protein>
<dbReference type="EC" id="3.6.1.9" evidence="1"/>
<dbReference type="EMBL" id="CP000360">
    <property type="protein sequence ID" value="ABF39245.1"/>
    <property type="molecule type" value="Genomic_DNA"/>
</dbReference>
<dbReference type="RefSeq" id="WP_011521047.1">
    <property type="nucleotide sequence ID" value="NC_008009.1"/>
</dbReference>
<dbReference type="SMR" id="Q1IV55"/>
<dbReference type="STRING" id="204669.Acid345_0240"/>
<dbReference type="EnsemblBacteria" id="ABF39245">
    <property type="protein sequence ID" value="ABF39245"/>
    <property type="gene ID" value="Acid345_0240"/>
</dbReference>
<dbReference type="KEGG" id="aba:Acid345_0240"/>
<dbReference type="eggNOG" id="COG0424">
    <property type="taxonomic scope" value="Bacteria"/>
</dbReference>
<dbReference type="HOGENOM" id="CLU_040416_2_1_0"/>
<dbReference type="OrthoDB" id="9807767at2"/>
<dbReference type="Proteomes" id="UP000002432">
    <property type="component" value="Chromosome"/>
</dbReference>
<dbReference type="GO" id="GO:0005737">
    <property type="term" value="C:cytoplasm"/>
    <property type="evidence" value="ECO:0007669"/>
    <property type="project" value="UniProtKB-SubCell"/>
</dbReference>
<dbReference type="GO" id="GO:0036218">
    <property type="term" value="F:dTTP diphosphatase activity"/>
    <property type="evidence" value="ECO:0007669"/>
    <property type="project" value="RHEA"/>
</dbReference>
<dbReference type="GO" id="GO:0036221">
    <property type="term" value="F:UTP diphosphatase activity"/>
    <property type="evidence" value="ECO:0007669"/>
    <property type="project" value="RHEA"/>
</dbReference>
<dbReference type="GO" id="GO:0009117">
    <property type="term" value="P:nucleotide metabolic process"/>
    <property type="evidence" value="ECO:0007669"/>
    <property type="project" value="UniProtKB-KW"/>
</dbReference>
<dbReference type="CDD" id="cd00555">
    <property type="entry name" value="Maf"/>
    <property type="match status" value="1"/>
</dbReference>
<dbReference type="Gene3D" id="3.90.950.10">
    <property type="match status" value="1"/>
</dbReference>
<dbReference type="HAMAP" id="MF_00528">
    <property type="entry name" value="Maf"/>
    <property type="match status" value="1"/>
</dbReference>
<dbReference type="InterPro" id="IPR029001">
    <property type="entry name" value="ITPase-like_fam"/>
</dbReference>
<dbReference type="InterPro" id="IPR003697">
    <property type="entry name" value="Maf-like"/>
</dbReference>
<dbReference type="NCBIfam" id="TIGR00172">
    <property type="entry name" value="maf"/>
    <property type="match status" value="1"/>
</dbReference>
<dbReference type="PANTHER" id="PTHR43213">
    <property type="entry name" value="BIFUNCTIONAL DTTP/UTP PYROPHOSPHATASE/METHYLTRANSFERASE PROTEIN-RELATED"/>
    <property type="match status" value="1"/>
</dbReference>
<dbReference type="PANTHER" id="PTHR43213:SF5">
    <property type="entry name" value="BIFUNCTIONAL DTTP_UTP PYROPHOSPHATASE_METHYLTRANSFERASE PROTEIN-RELATED"/>
    <property type="match status" value="1"/>
</dbReference>
<dbReference type="Pfam" id="PF02545">
    <property type="entry name" value="Maf"/>
    <property type="match status" value="1"/>
</dbReference>
<dbReference type="PIRSF" id="PIRSF006305">
    <property type="entry name" value="Maf"/>
    <property type="match status" value="1"/>
</dbReference>
<dbReference type="SUPFAM" id="SSF52972">
    <property type="entry name" value="ITPase-like"/>
    <property type="match status" value="1"/>
</dbReference>
<organism>
    <name type="scientific">Koribacter versatilis (strain Ellin345)</name>
    <dbReference type="NCBI Taxonomy" id="204669"/>
    <lineage>
        <taxon>Bacteria</taxon>
        <taxon>Pseudomonadati</taxon>
        <taxon>Acidobacteriota</taxon>
        <taxon>Terriglobia</taxon>
        <taxon>Terriglobales</taxon>
        <taxon>Candidatus Korobacteraceae</taxon>
        <taxon>Candidatus Korobacter</taxon>
    </lineage>
</organism>
<gene>
    <name type="ordered locus">Acid345_0240</name>
</gene>
<proteinExistence type="inferred from homology"/>
<keyword id="KW-0963">Cytoplasm</keyword>
<keyword id="KW-0378">Hydrolase</keyword>
<keyword id="KW-0546">Nucleotide metabolism</keyword>
<keyword id="KW-1185">Reference proteome</keyword>
<feature type="chain" id="PRO_0000267235" description="dTTP/UTP pyrophosphatase">
    <location>
        <begin position="1"/>
        <end position="193"/>
    </location>
</feature>
<feature type="active site" description="Proton acceptor" evidence="1">
    <location>
        <position position="75"/>
    </location>
</feature>
<feature type="site" description="Important for substrate specificity" evidence="1">
    <location>
        <position position="18"/>
    </location>
</feature>
<feature type="site" description="Important for substrate specificity" evidence="1">
    <location>
        <position position="76"/>
    </location>
</feature>
<feature type="site" description="Important for substrate specificity" evidence="1">
    <location>
        <position position="158"/>
    </location>
</feature>